<dbReference type="EC" id="1.2.1.38" evidence="1"/>
<dbReference type="EMBL" id="CP000712">
    <property type="protein sequence ID" value="ABQ76635.1"/>
    <property type="molecule type" value="Genomic_DNA"/>
</dbReference>
<dbReference type="SMR" id="A5VXM5"/>
<dbReference type="KEGG" id="ppf:Pput_0465"/>
<dbReference type="eggNOG" id="COG0002">
    <property type="taxonomic scope" value="Bacteria"/>
</dbReference>
<dbReference type="HOGENOM" id="CLU_006384_0_1_6"/>
<dbReference type="UniPathway" id="UPA00068">
    <property type="reaction ID" value="UER00108"/>
</dbReference>
<dbReference type="GO" id="GO:0005737">
    <property type="term" value="C:cytoplasm"/>
    <property type="evidence" value="ECO:0007669"/>
    <property type="project" value="UniProtKB-SubCell"/>
</dbReference>
<dbReference type="GO" id="GO:0003942">
    <property type="term" value="F:N-acetyl-gamma-glutamyl-phosphate reductase activity"/>
    <property type="evidence" value="ECO:0007669"/>
    <property type="project" value="UniProtKB-UniRule"/>
</dbReference>
<dbReference type="GO" id="GO:0051287">
    <property type="term" value="F:NAD binding"/>
    <property type="evidence" value="ECO:0007669"/>
    <property type="project" value="InterPro"/>
</dbReference>
<dbReference type="GO" id="GO:0070401">
    <property type="term" value="F:NADP+ binding"/>
    <property type="evidence" value="ECO:0007669"/>
    <property type="project" value="InterPro"/>
</dbReference>
<dbReference type="GO" id="GO:0006526">
    <property type="term" value="P:L-arginine biosynthetic process"/>
    <property type="evidence" value="ECO:0007669"/>
    <property type="project" value="UniProtKB-UniRule"/>
</dbReference>
<dbReference type="CDD" id="cd23934">
    <property type="entry name" value="AGPR_1_C"/>
    <property type="match status" value="1"/>
</dbReference>
<dbReference type="CDD" id="cd17895">
    <property type="entry name" value="AGPR_1_N"/>
    <property type="match status" value="1"/>
</dbReference>
<dbReference type="FunFam" id="3.30.360.10:FF:000014">
    <property type="entry name" value="N-acetyl-gamma-glutamyl-phosphate reductase"/>
    <property type="match status" value="1"/>
</dbReference>
<dbReference type="Gene3D" id="3.30.360.10">
    <property type="entry name" value="Dihydrodipicolinate Reductase, domain 2"/>
    <property type="match status" value="1"/>
</dbReference>
<dbReference type="Gene3D" id="3.40.50.720">
    <property type="entry name" value="NAD(P)-binding Rossmann-like Domain"/>
    <property type="match status" value="1"/>
</dbReference>
<dbReference type="HAMAP" id="MF_00150">
    <property type="entry name" value="ArgC_type1"/>
    <property type="match status" value="1"/>
</dbReference>
<dbReference type="InterPro" id="IPR023013">
    <property type="entry name" value="AGPR_AS"/>
</dbReference>
<dbReference type="InterPro" id="IPR000706">
    <property type="entry name" value="AGPR_type-1"/>
</dbReference>
<dbReference type="InterPro" id="IPR036291">
    <property type="entry name" value="NAD(P)-bd_dom_sf"/>
</dbReference>
<dbReference type="InterPro" id="IPR050085">
    <property type="entry name" value="NAGSA_dehydrogenase"/>
</dbReference>
<dbReference type="InterPro" id="IPR000534">
    <property type="entry name" value="Semialdehyde_DH_NAD-bd"/>
</dbReference>
<dbReference type="NCBIfam" id="TIGR01850">
    <property type="entry name" value="argC"/>
    <property type="match status" value="1"/>
</dbReference>
<dbReference type="PANTHER" id="PTHR32338:SF10">
    <property type="entry name" value="N-ACETYL-GAMMA-GLUTAMYL-PHOSPHATE REDUCTASE, CHLOROPLASTIC-RELATED"/>
    <property type="match status" value="1"/>
</dbReference>
<dbReference type="PANTHER" id="PTHR32338">
    <property type="entry name" value="N-ACETYL-GAMMA-GLUTAMYL-PHOSPHATE REDUCTASE, CHLOROPLASTIC-RELATED-RELATED"/>
    <property type="match status" value="1"/>
</dbReference>
<dbReference type="Pfam" id="PF01118">
    <property type="entry name" value="Semialdhyde_dh"/>
    <property type="match status" value="1"/>
</dbReference>
<dbReference type="Pfam" id="PF22698">
    <property type="entry name" value="Semialdhyde_dhC_1"/>
    <property type="match status" value="1"/>
</dbReference>
<dbReference type="SMART" id="SM00859">
    <property type="entry name" value="Semialdhyde_dh"/>
    <property type="match status" value="1"/>
</dbReference>
<dbReference type="SUPFAM" id="SSF55347">
    <property type="entry name" value="Glyceraldehyde-3-phosphate dehydrogenase-like, C-terminal domain"/>
    <property type="match status" value="1"/>
</dbReference>
<dbReference type="SUPFAM" id="SSF51735">
    <property type="entry name" value="NAD(P)-binding Rossmann-fold domains"/>
    <property type="match status" value="1"/>
</dbReference>
<dbReference type="PROSITE" id="PS01224">
    <property type="entry name" value="ARGC"/>
    <property type="match status" value="1"/>
</dbReference>
<organism>
    <name type="scientific">Pseudomonas putida (strain ATCC 700007 / DSM 6899 / JCM 31910 / BCRC 17059 / LMG 24140 / F1)</name>
    <dbReference type="NCBI Taxonomy" id="351746"/>
    <lineage>
        <taxon>Bacteria</taxon>
        <taxon>Pseudomonadati</taxon>
        <taxon>Pseudomonadota</taxon>
        <taxon>Gammaproteobacteria</taxon>
        <taxon>Pseudomonadales</taxon>
        <taxon>Pseudomonadaceae</taxon>
        <taxon>Pseudomonas</taxon>
    </lineage>
</organism>
<keyword id="KW-0028">Amino-acid biosynthesis</keyword>
<keyword id="KW-0055">Arginine biosynthesis</keyword>
<keyword id="KW-0963">Cytoplasm</keyword>
<keyword id="KW-0521">NADP</keyword>
<keyword id="KW-0560">Oxidoreductase</keyword>
<gene>
    <name evidence="1" type="primary">argC</name>
    <name type="ordered locus">Pput_0465</name>
</gene>
<evidence type="ECO:0000255" key="1">
    <source>
        <dbReference type="HAMAP-Rule" id="MF_00150"/>
    </source>
</evidence>
<feature type="chain" id="PRO_1000011043" description="N-acetyl-gamma-glutamyl-phosphate reductase">
    <location>
        <begin position="1"/>
        <end position="344"/>
    </location>
</feature>
<feature type="active site" evidence="1">
    <location>
        <position position="150"/>
    </location>
</feature>
<name>ARGC_PSEP1</name>
<proteinExistence type="inferred from homology"/>
<protein>
    <recommendedName>
        <fullName evidence="1">N-acetyl-gamma-glutamyl-phosphate reductase</fullName>
        <shortName evidence="1">AGPR</shortName>
        <ecNumber evidence="1">1.2.1.38</ecNumber>
    </recommendedName>
    <alternativeName>
        <fullName evidence="1">N-acetyl-glutamate semialdehyde dehydrogenase</fullName>
        <shortName evidence="1">NAGSA dehydrogenase</shortName>
    </alternativeName>
</protein>
<accession>A5VXM5</accession>
<reference key="1">
    <citation type="submission" date="2007-05" db="EMBL/GenBank/DDBJ databases">
        <title>Complete sequence of Pseudomonas putida F1.</title>
        <authorList>
            <consortium name="US DOE Joint Genome Institute"/>
            <person name="Copeland A."/>
            <person name="Lucas S."/>
            <person name="Lapidus A."/>
            <person name="Barry K."/>
            <person name="Detter J.C."/>
            <person name="Glavina del Rio T."/>
            <person name="Hammon N."/>
            <person name="Israni S."/>
            <person name="Dalin E."/>
            <person name="Tice H."/>
            <person name="Pitluck S."/>
            <person name="Chain P."/>
            <person name="Malfatti S."/>
            <person name="Shin M."/>
            <person name="Vergez L."/>
            <person name="Schmutz J."/>
            <person name="Larimer F."/>
            <person name="Land M."/>
            <person name="Hauser L."/>
            <person name="Kyrpides N."/>
            <person name="Lykidis A."/>
            <person name="Parales R."/>
            <person name="Richardson P."/>
        </authorList>
    </citation>
    <scope>NUCLEOTIDE SEQUENCE [LARGE SCALE GENOMIC DNA]</scope>
    <source>
        <strain>ATCC 700007 / DSM 6899 / JCM 31910 / BCRC 17059 / LMG 24140 / F1</strain>
    </source>
</reference>
<comment type="function">
    <text evidence="1">Catalyzes the NADPH-dependent reduction of N-acetyl-5-glutamyl phosphate to yield N-acetyl-L-glutamate 5-semialdehyde.</text>
</comment>
<comment type="catalytic activity">
    <reaction evidence="1">
        <text>N-acetyl-L-glutamate 5-semialdehyde + phosphate + NADP(+) = N-acetyl-L-glutamyl 5-phosphate + NADPH + H(+)</text>
        <dbReference type="Rhea" id="RHEA:21588"/>
        <dbReference type="ChEBI" id="CHEBI:15378"/>
        <dbReference type="ChEBI" id="CHEBI:29123"/>
        <dbReference type="ChEBI" id="CHEBI:43474"/>
        <dbReference type="ChEBI" id="CHEBI:57783"/>
        <dbReference type="ChEBI" id="CHEBI:57936"/>
        <dbReference type="ChEBI" id="CHEBI:58349"/>
        <dbReference type="EC" id="1.2.1.38"/>
    </reaction>
</comment>
<comment type="pathway">
    <text evidence="1">Amino-acid biosynthesis; L-arginine biosynthesis; N(2)-acetyl-L-ornithine from L-glutamate: step 3/4.</text>
</comment>
<comment type="subcellular location">
    <subcellularLocation>
        <location evidence="1">Cytoplasm</location>
    </subcellularLocation>
</comment>
<comment type="similarity">
    <text evidence="1">Belongs to the NAGSA dehydrogenase family. Type 1 subfamily.</text>
</comment>
<sequence length="344" mass="36250">MIKVGIVGGTGYTGVELLRLLAQHPQAEVAVITSRSEAGVAVADMYPNLRGHYDGLAFSVPDSKALGACDVVFFATPHGVAHALAGELLAAGTKVIDLSADFRLQDAVEWGKWYGQPHGAPELLKDAVYGLPEVNREKIRQARLIAVPGCYPTATQLGFLPLLEAGLADASRLIADCKSGVSGAGRGAAVGSLFCEAGESMKAYAVKGHRHLPEISQGLRLAAGKDIGLTFVPHLTPMIRGIHATLYANVVDTSVDLQALFEKRYADEPFVDVMPAGSHPETRSVRGANVCRIAVHRPQGGDLVVVLSVIDNLVKGASGQAVQNLNILFGLDERMGLSHAGLLP</sequence>